<comment type="function">
    <text evidence="1">DNA-dependent RNA polymerase catalyzes the transcription of DNA into RNA using the four ribonucleoside triphosphates as substrates.</text>
</comment>
<comment type="catalytic activity">
    <reaction evidence="1">
        <text>RNA(n) + a ribonucleoside 5'-triphosphate = RNA(n+1) + diphosphate</text>
        <dbReference type="Rhea" id="RHEA:21248"/>
        <dbReference type="Rhea" id="RHEA-COMP:14527"/>
        <dbReference type="Rhea" id="RHEA-COMP:17342"/>
        <dbReference type="ChEBI" id="CHEBI:33019"/>
        <dbReference type="ChEBI" id="CHEBI:61557"/>
        <dbReference type="ChEBI" id="CHEBI:140395"/>
        <dbReference type="EC" id="2.7.7.6"/>
    </reaction>
</comment>
<comment type="subunit">
    <text evidence="1">Homodimer. The RNAP catalytic core consists of 2 alpha, 1 beta, 1 beta' and 1 omega subunit. When a sigma factor is associated with the core the holoenzyme is formed, which can initiate transcription.</text>
</comment>
<comment type="domain">
    <text evidence="1">The N-terminal domain is essential for RNAP assembly and basal transcription, whereas the C-terminal domain is involved in interaction with transcriptional regulators and with upstream promoter elements.</text>
</comment>
<comment type="similarity">
    <text evidence="1">Belongs to the RNA polymerase alpha chain family.</text>
</comment>
<protein>
    <recommendedName>
        <fullName evidence="1">DNA-directed RNA polymerase subunit alpha</fullName>
        <shortName evidence="1">RNAP subunit alpha</shortName>
        <ecNumber evidence="1">2.7.7.6</ecNumber>
    </recommendedName>
    <alternativeName>
        <fullName evidence="1">RNA polymerase subunit alpha</fullName>
    </alternativeName>
    <alternativeName>
        <fullName evidence="1">Transcriptase subunit alpha</fullName>
    </alternativeName>
</protein>
<accession>Q5LXT7</accession>
<dbReference type="EC" id="2.7.7.6" evidence="1"/>
<dbReference type="EMBL" id="CP000024">
    <property type="protein sequence ID" value="AAV63421.1"/>
    <property type="molecule type" value="Genomic_DNA"/>
</dbReference>
<dbReference type="RefSeq" id="WP_002952135.1">
    <property type="nucleotide sequence ID" value="NC_006449.1"/>
</dbReference>
<dbReference type="SMR" id="Q5LXT7"/>
<dbReference type="KEGG" id="stc:str1908"/>
<dbReference type="HOGENOM" id="CLU_053084_0_1_9"/>
<dbReference type="GO" id="GO:0005737">
    <property type="term" value="C:cytoplasm"/>
    <property type="evidence" value="ECO:0007669"/>
    <property type="project" value="UniProtKB-ARBA"/>
</dbReference>
<dbReference type="GO" id="GO:0000428">
    <property type="term" value="C:DNA-directed RNA polymerase complex"/>
    <property type="evidence" value="ECO:0007669"/>
    <property type="project" value="UniProtKB-KW"/>
</dbReference>
<dbReference type="GO" id="GO:0003677">
    <property type="term" value="F:DNA binding"/>
    <property type="evidence" value="ECO:0007669"/>
    <property type="project" value="UniProtKB-UniRule"/>
</dbReference>
<dbReference type="GO" id="GO:0003899">
    <property type="term" value="F:DNA-directed RNA polymerase activity"/>
    <property type="evidence" value="ECO:0007669"/>
    <property type="project" value="UniProtKB-UniRule"/>
</dbReference>
<dbReference type="GO" id="GO:0046983">
    <property type="term" value="F:protein dimerization activity"/>
    <property type="evidence" value="ECO:0007669"/>
    <property type="project" value="InterPro"/>
</dbReference>
<dbReference type="GO" id="GO:0006351">
    <property type="term" value="P:DNA-templated transcription"/>
    <property type="evidence" value="ECO:0007669"/>
    <property type="project" value="UniProtKB-UniRule"/>
</dbReference>
<dbReference type="CDD" id="cd06928">
    <property type="entry name" value="RNAP_alpha_NTD"/>
    <property type="match status" value="1"/>
</dbReference>
<dbReference type="FunFam" id="1.10.150.20:FF:000001">
    <property type="entry name" value="DNA-directed RNA polymerase subunit alpha"/>
    <property type="match status" value="1"/>
</dbReference>
<dbReference type="FunFam" id="2.170.120.12:FF:000001">
    <property type="entry name" value="DNA-directed RNA polymerase subunit alpha"/>
    <property type="match status" value="1"/>
</dbReference>
<dbReference type="Gene3D" id="1.10.150.20">
    <property type="entry name" value="5' to 3' exonuclease, C-terminal subdomain"/>
    <property type="match status" value="1"/>
</dbReference>
<dbReference type="Gene3D" id="2.170.120.12">
    <property type="entry name" value="DNA-directed RNA polymerase, insert domain"/>
    <property type="match status" value="1"/>
</dbReference>
<dbReference type="Gene3D" id="3.30.1360.10">
    <property type="entry name" value="RNA polymerase, RBP11-like subunit"/>
    <property type="match status" value="1"/>
</dbReference>
<dbReference type="HAMAP" id="MF_00059">
    <property type="entry name" value="RNApol_bact_RpoA"/>
    <property type="match status" value="1"/>
</dbReference>
<dbReference type="InterPro" id="IPR011262">
    <property type="entry name" value="DNA-dir_RNA_pol_insert"/>
</dbReference>
<dbReference type="InterPro" id="IPR011263">
    <property type="entry name" value="DNA-dir_RNA_pol_RpoA/D/Rpb3"/>
</dbReference>
<dbReference type="InterPro" id="IPR011773">
    <property type="entry name" value="DNA-dir_RpoA"/>
</dbReference>
<dbReference type="InterPro" id="IPR036603">
    <property type="entry name" value="RBP11-like"/>
</dbReference>
<dbReference type="InterPro" id="IPR011260">
    <property type="entry name" value="RNAP_asu_C"/>
</dbReference>
<dbReference type="InterPro" id="IPR036643">
    <property type="entry name" value="RNApol_insert_sf"/>
</dbReference>
<dbReference type="NCBIfam" id="NF003513">
    <property type="entry name" value="PRK05182.1-2"/>
    <property type="match status" value="1"/>
</dbReference>
<dbReference type="NCBIfam" id="NF003515">
    <property type="entry name" value="PRK05182.2-1"/>
    <property type="match status" value="1"/>
</dbReference>
<dbReference type="NCBIfam" id="NF003516">
    <property type="entry name" value="PRK05182.2-2"/>
    <property type="match status" value="1"/>
</dbReference>
<dbReference type="NCBIfam" id="NF003518">
    <property type="entry name" value="PRK05182.2-4"/>
    <property type="match status" value="1"/>
</dbReference>
<dbReference type="NCBIfam" id="NF003519">
    <property type="entry name" value="PRK05182.2-5"/>
    <property type="match status" value="1"/>
</dbReference>
<dbReference type="NCBIfam" id="TIGR02027">
    <property type="entry name" value="rpoA"/>
    <property type="match status" value="1"/>
</dbReference>
<dbReference type="Pfam" id="PF01000">
    <property type="entry name" value="RNA_pol_A_bac"/>
    <property type="match status" value="1"/>
</dbReference>
<dbReference type="Pfam" id="PF03118">
    <property type="entry name" value="RNA_pol_A_CTD"/>
    <property type="match status" value="1"/>
</dbReference>
<dbReference type="Pfam" id="PF01193">
    <property type="entry name" value="RNA_pol_L"/>
    <property type="match status" value="1"/>
</dbReference>
<dbReference type="SMART" id="SM00662">
    <property type="entry name" value="RPOLD"/>
    <property type="match status" value="1"/>
</dbReference>
<dbReference type="SUPFAM" id="SSF47789">
    <property type="entry name" value="C-terminal domain of RNA polymerase alpha subunit"/>
    <property type="match status" value="1"/>
</dbReference>
<dbReference type="SUPFAM" id="SSF56553">
    <property type="entry name" value="Insert subdomain of RNA polymerase alpha subunit"/>
    <property type="match status" value="1"/>
</dbReference>
<dbReference type="SUPFAM" id="SSF55257">
    <property type="entry name" value="RBP11-like subunits of RNA polymerase"/>
    <property type="match status" value="1"/>
</dbReference>
<reference key="1">
    <citation type="journal article" date="2004" name="Nat. Biotechnol.">
        <title>Complete sequence and comparative genome analysis of the dairy bacterium Streptococcus thermophilus.</title>
        <authorList>
            <person name="Bolotin A."/>
            <person name="Quinquis B."/>
            <person name="Renault P."/>
            <person name="Sorokin A."/>
            <person name="Ehrlich S.D."/>
            <person name="Kulakauskas S."/>
            <person name="Lapidus A."/>
            <person name="Goltsman E."/>
            <person name="Mazur M."/>
            <person name="Pusch G.D."/>
            <person name="Fonstein M."/>
            <person name="Overbeek R."/>
            <person name="Kyprides N."/>
            <person name="Purnelle B."/>
            <person name="Prozzi D."/>
            <person name="Ngui K."/>
            <person name="Masuy D."/>
            <person name="Hancy F."/>
            <person name="Burteau S."/>
            <person name="Boutry M."/>
            <person name="Delcour J."/>
            <person name="Goffeau A."/>
            <person name="Hols P."/>
        </authorList>
    </citation>
    <scope>NUCLEOTIDE SEQUENCE [LARGE SCALE GENOMIC DNA]</scope>
    <source>
        <strain>CNRZ 1066</strain>
    </source>
</reference>
<gene>
    <name evidence="1" type="primary">rpoA</name>
    <name type="ordered locus">str1908</name>
</gene>
<name>RPOA_STRT1</name>
<keyword id="KW-0240">DNA-directed RNA polymerase</keyword>
<keyword id="KW-0548">Nucleotidyltransferase</keyword>
<keyword id="KW-0804">Transcription</keyword>
<keyword id="KW-0808">Transferase</keyword>
<organism>
    <name type="scientific">Streptococcus thermophilus (strain CNRZ 1066)</name>
    <dbReference type="NCBI Taxonomy" id="299768"/>
    <lineage>
        <taxon>Bacteria</taxon>
        <taxon>Bacillati</taxon>
        <taxon>Bacillota</taxon>
        <taxon>Bacilli</taxon>
        <taxon>Lactobacillales</taxon>
        <taxon>Streptococcaceae</taxon>
        <taxon>Streptococcus</taxon>
    </lineage>
</organism>
<feature type="chain" id="PRO_0000225308" description="DNA-directed RNA polymerase subunit alpha">
    <location>
        <begin position="1"/>
        <end position="312"/>
    </location>
</feature>
<feature type="region of interest" description="Alpha N-terminal domain (alpha-NTD)" evidence="1">
    <location>
        <begin position="1"/>
        <end position="226"/>
    </location>
</feature>
<feature type="region of interest" description="Alpha C-terminal domain (alpha-CTD)" evidence="1">
    <location>
        <begin position="242"/>
        <end position="312"/>
    </location>
</feature>
<sequence length="312" mass="34433">MIEFEKPIITKIDENKDYGKFVIEPLERGYGTTLGNSLRRVLLSSLPGAAVTSIKIDGVLHEFDTVPGVREDVMQIILNIKGLAVKSYVEDEKTIELDVQGPAEVTAGDILTDSDIEIVNPDHYLFTIAEGASFQATMTVSTNRGYVPAEENKKDDAPVGTLAVDSIYTPVKKVNYQVEPARVGSNDGFDKLTIEIVTNGTIIPEDALGLSARILIEHLNLFTDLTDVAKATDVMKETEKVNDEKLLDRTIEELDLSVRSYNCLKRAGINTVHDLTEKTEPEMMKVRNLGRKSLEEVKVKLADLGLGLKNDK</sequence>
<proteinExistence type="inferred from homology"/>
<evidence type="ECO:0000255" key="1">
    <source>
        <dbReference type="HAMAP-Rule" id="MF_00059"/>
    </source>
</evidence>